<reference key="1">
    <citation type="journal article" date="1996" name="DNA Res.">
        <title>Sequence analysis of the genome of the unicellular cyanobacterium Synechocystis sp. strain PCC6803. II. Sequence determination of the entire genome and assignment of potential protein-coding regions.</title>
        <authorList>
            <person name="Kaneko T."/>
            <person name="Sato S."/>
            <person name="Kotani H."/>
            <person name="Tanaka A."/>
            <person name="Asamizu E."/>
            <person name="Nakamura Y."/>
            <person name="Miyajima N."/>
            <person name="Hirosawa M."/>
            <person name="Sugiura M."/>
            <person name="Sasamoto S."/>
            <person name="Kimura T."/>
            <person name="Hosouchi T."/>
            <person name="Matsuno A."/>
            <person name="Muraki A."/>
            <person name="Nakazaki N."/>
            <person name="Naruo K."/>
            <person name="Okumura S."/>
            <person name="Shimpo S."/>
            <person name="Takeuchi C."/>
            <person name="Wada T."/>
            <person name="Watanabe A."/>
            <person name="Yamada M."/>
            <person name="Yasuda M."/>
            <person name="Tabata S."/>
        </authorList>
    </citation>
    <scope>NUCLEOTIDE SEQUENCE [LARGE SCALE GENOMIC DNA]</scope>
    <source>
        <strain>ATCC 27184 / PCC 6803 / Kazusa</strain>
    </source>
</reference>
<feature type="chain" id="PRO_0000157896" description="Uncharacterized protein sll1783">
    <location>
        <begin position="1"/>
        <end position="147"/>
    </location>
</feature>
<feature type="domain" description="ABM">
    <location>
        <begin position="50"/>
        <end position="138"/>
    </location>
</feature>
<gene>
    <name type="ordered locus">sll1783</name>
</gene>
<organism>
    <name type="scientific">Synechocystis sp. (strain ATCC 27184 / PCC 6803 / Kazusa)</name>
    <dbReference type="NCBI Taxonomy" id="1111708"/>
    <lineage>
        <taxon>Bacteria</taxon>
        <taxon>Bacillati</taxon>
        <taxon>Cyanobacteriota</taxon>
        <taxon>Cyanophyceae</taxon>
        <taxon>Synechococcales</taxon>
        <taxon>Merismopediaceae</taxon>
        <taxon>Synechocystis</taxon>
    </lineage>
</organism>
<sequence length="147" mass="16822">MRADFFLSDNRAALLKRGLTIILSFLVFTSIFLLPSPSLAEDVKGADDPIVVAGNIKVKPDKKEEFIALSQTFIEPSRSEPGCISYSFYEDETEDNSFLFFEVWRNRAALDYHFQTPYFHEFVEKSPDLLAKPAEIKIYKIAETQTL</sequence>
<keyword id="KW-1185">Reference proteome</keyword>
<proteinExistence type="inferred from homology"/>
<accession>P73602</accession>
<evidence type="ECO:0000305" key="1"/>
<name>Y1783_SYNY3</name>
<comment type="similarity">
    <text evidence="1">Belongs to the LsrG family.</text>
</comment>
<dbReference type="EMBL" id="BA000022">
    <property type="protein sequence ID" value="BAA17646.1"/>
    <property type="molecule type" value="Genomic_DNA"/>
</dbReference>
<dbReference type="PIR" id="S77088">
    <property type="entry name" value="S77088"/>
</dbReference>
<dbReference type="SMR" id="P73602"/>
<dbReference type="FunCoup" id="P73602">
    <property type="interactions" value="13"/>
</dbReference>
<dbReference type="IntAct" id="P73602">
    <property type="interactions" value="1"/>
</dbReference>
<dbReference type="STRING" id="1148.gene:10498513"/>
<dbReference type="PaxDb" id="1148-1652727"/>
<dbReference type="EnsemblBacteria" id="BAA17646">
    <property type="protein sequence ID" value="BAA17646"/>
    <property type="gene ID" value="BAA17646"/>
</dbReference>
<dbReference type="KEGG" id="syn:sll1783"/>
<dbReference type="eggNOG" id="COG1359">
    <property type="taxonomic scope" value="Bacteria"/>
</dbReference>
<dbReference type="InParanoid" id="P73602"/>
<dbReference type="PhylomeDB" id="P73602"/>
<dbReference type="Proteomes" id="UP000001425">
    <property type="component" value="Chromosome"/>
</dbReference>
<dbReference type="GO" id="GO:0003824">
    <property type="term" value="F:catalytic activity"/>
    <property type="evidence" value="ECO:0000318"/>
    <property type="project" value="GO_Central"/>
</dbReference>
<dbReference type="Gene3D" id="3.30.70.100">
    <property type="match status" value="1"/>
</dbReference>
<dbReference type="InterPro" id="IPR007138">
    <property type="entry name" value="ABM_dom"/>
</dbReference>
<dbReference type="InterPro" id="IPR050744">
    <property type="entry name" value="AI-2_Isomerase_LsrG"/>
</dbReference>
<dbReference type="InterPro" id="IPR011008">
    <property type="entry name" value="Dimeric_a/b-barrel"/>
</dbReference>
<dbReference type="PANTHER" id="PTHR33336:SF3">
    <property type="entry name" value="ABM DOMAIN-CONTAINING PROTEIN"/>
    <property type="match status" value="1"/>
</dbReference>
<dbReference type="PANTHER" id="PTHR33336">
    <property type="entry name" value="QUINOL MONOOXYGENASE YGIN-RELATED"/>
    <property type="match status" value="1"/>
</dbReference>
<dbReference type="Pfam" id="PF03992">
    <property type="entry name" value="ABM"/>
    <property type="match status" value="1"/>
</dbReference>
<dbReference type="SUPFAM" id="SSF54909">
    <property type="entry name" value="Dimeric alpha+beta barrel"/>
    <property type="match status" value="1"/>
</dbReference>
<dbReference type="PROSITE" id="PS51725">
    <property type="entry name" value="ABM"/>
    <property type="match status" value="1"/>
</dbReference>
<protein>
    <recommendedName>
        <fullName>Uncharacterized protein sll1783</fullName>
    </recommendedName>
</protein>